<organism>
    <name type="scientific">Pseudomonas brassicacearum (strain NFM421)</name>
    <dbReference type="NCBI Taxonomy" id="994484"/>
    <lineage>
        <taxon>Bacteria</taxon>
        <taxon>Pseudomonadati</taxon>
        <taxon>Pseudomonadota</taxon>
        <taxon>Gammaproteobacteria</taxon>
        <taxon>Pseudomonadales</taxon>
        <taxon>Pseudomonadaceae</taxon>
        <taxon>Pseudomonas</taxon>
    </lineage>
</organism>
<feature type="signal peptide" evidence="2">
    <location>
        <begin position="1"/>
        <end position="25"/>
    </location>
</feature>
<feature type="chain" id="PRO_0000026718" description="Alkaline proteinase inhibitor">
    <location>
        <begin position="26"/>
        <end position="140"/>
    </location>
</feature>
<comment type="function">
    <text>Inhibitor of the alkaline protease.</text>
</comment>
<comment type="subcellular location">
    <subcellularLocation>
        <location evidence="1">Periplasm</location>
    </subcellularLocation>
</comment>
<comment type="similarity">
    <text evidence="3">Belongs to the protease inhibitor I38 family.</text>
</comment>
<comment type="sequence caution" evidence="3">
    <conflict type="erroneous initiation">
        <sequence resource="EMBL-CDS" id="AEA69122"/>
    </conflict>
    <text>Extended N-terminus.</text>
</comment>
<dbReference type="EMBL" id="AF286062">
    <property type="protein sequence ID" value="AAF87589.1"/>
    <property type="molecule type" value="mRNA"/>
</dbReference>
<dbReference type="EMBL" id="CP002585">
    <property type="protein sequence ID" value="AEA69122.1"/>
    <property type="status" value="ALT_INIT"/>
    <property type="molecule type" value="Genomic_DNA"/>
</dbReference>
<dbReference type="RefSeq" id="WP_003201773.1">
    <property type="nucleotide sequence ID" value="NC_015379.1"/>
</dbReference>
<dbReference type="SMR" id="Q9KGS7"/>
<dbReference type="STRING" id="994484.PSEBR_a2822"/>
<dbReference type="MEROPS" id="I38.001"/>
<dbReference type="KEGG" id="pba:PSEBR_a2822"/>
<dbReference type="HOGENOM" id="CLU_155270_1_0_6"/>
<dbReference type="Proteomes" id="UP000006692">
    <property type="component" value="Chromosome"/>
</dbReference>
<dbReference type="GO" id="GO:0042597">
    <property type="term" value="C:periplasmic space"/>
    <property type="evidence" value="ECO:0007669"/>
    <property type="project" value="UniProtKB-SubCell"/>
</dbReference>
<dbReference type="GO" id="GO:0004866">
    <property type="term" value="F:endopeptidase inhibitor activity"/>
    <property type="evidence" value="ECO:0007669"/>
    <property type="project" value="InterPro"/>
</dbReference>
<dbReference type="Gene3D" id="2.40.128.10">
    <property type="match status" value="1"/>
</dbReference>
<dbReference type="InterPro" id="IPR021140">
    <property type="entry name" value="Inh/Omp19"/>
</dbReference>
<dbReference type="InterPro" id="IPR016085">
    <property type="entry name" value="Protease_inh_b-brl_dom"/>
</dbReference>
<dbReference type="Pfam" id="PF02974">
    <property type="entry name" value="Inh"/>
    <property type="match status" value="1"/>
</dbReference>
<dbReference type="SUPFAM" id="SSF50882">
    <property type="entry name" value="beta-Barrel protease inhibitors"/>
    <property type="match status" value="1"/>
</dbReference>
<gene>
    <name type="primary">inh</name>
    <name type="synonym">aprI</name>
    <name type="ORF">PSEBR_a2822</name>
</gene>
<keyword id="KW-0481">Metalloenzyme inhibitor</keyword>
<keyword id="KW-0483">Metalloprotease inhibitor</keyword>
<keyword id="KW-0574">Periplasm</keyword>
<keyword id="KW-0646">Protease inhibitor</keyword>
<keyword id="KW-0732">Signal</keyword>
<sequence>MPSSVQATAGLLATLMMFCGEVAMARSLLLAEPSQLAGQWQAVLSSPQDNAQTQAMQDKPSNSCLVELKVDQTLGGQTDCLGQWLGDEPVRWFTEPDGLSLIGKQDSRTHLGLRQGDHYQMTLKSGLILRLERNKSQSAH</sequence>
<name>INH_PSEBN</name>
<proteinExistence type="evidence at transcript level"/>
<protein>
    <recommendedName>
        <fullName>Alkaline proteinase inhibitor</fullName>
    </recommendedName>
</protein>
<reference key="1">
    <citation type="journal article" date="2001" name="J. Bacteriol.">
        <title>Phase-variable expression of an operon encoding extracellular alkaline protease, a serine protease homolog, and lipase in Pseudomonas brassicacearum.</title>
        <authorList>
            <person name="Chabeaud P."/>
            <person name="de Groot A."/>
            <person name="Bitter W."/>
            <person name="Tommassen J."/>
            <person name="Heulin T."/>
            <person name="Achouak W."/>
        </authorList>
    </citation>
    <scope>NUCLEOTIDE SEQUENCE [MRNA]</scope>
    <source>
        <strain>NFM421</strain>
    </source>
</reference>
<reference key="2">
    <citation type="journal article" date="2011" name="J. Bacteriol.">
        <title>Complete genome sequence of a beneficial plant root-associated bacterium, Pseudomonas brassicacearum.</title>
        <authorList>
            <person name="Ortet P."/>
            <person name="Barakat M."/>
            <person name="Lalaouna D."/>
            <person name="Fochesato S."/>
            <person name="Barbe V."/>
            <person name="Vacherie B."/>
            <person name="Santaella C."/>
            <person name="Heulin T."/>
            <person name="Achouak W."/>
        </authorList>
    </citation>
    <scope>NUCLEOTIDE SEQUENCE [LARGE SCALE GENOMIC DNA]</scope>
    <source>
        <strain>NFM421</strain>
    </source>
</reference>
<accession>Q9KGS7</accession>
<accession>F2KG66</accession>
<evidence type="ECO:0000250" key="1"/>
<evidence type="ECO:0000255" key="2"/>
<evidence type="ECO:0000305" key="3"/>